<organism>
    <name type="scientific">Paramagnetospirillum magneticum (strain ATCC 700264 / AMB-1)</name>
    <name type="common">Magnetospirillum magneticum</name>
    <dbReference type="NCBI Taxonomy" id="342108"/>
    <lineage>
        <taxon>Bacteria</taxon>
        <taxon>Pseudomonadati</taxon>
        <taxon>Pseudomonadota</taxon>
        <taxon>Alphaproteobacteria</taxon>
        <taxon>Rhodospirillales</taxon>
        <taxon>Magnetospirillaceae</taxon>
        <taxon>Paramagnetospirillum</taxon>
    </lineage>
</organism>
<protein>
    <recommendedName>
        <fullName evidence="1">Pyridoxine/pyridoxamine 5'-phosphate oxidase</fullName>
        <ecNumber evidence="1">1.4.3.5</ecNumber>
    </recommendedName>
    <alternativeName>
        <fullName evidence="1">PNP/PMP oxidase</fullName>
        <shortName evidence="1">PNPOx</shortName>
    </alternativeName>
    <alternativeName>
        <fullName evidence="1">Pyridoxal 5'-phosphate synthase</fullName>
    </alternativeName>
</protein>
<name>PDXH_PARM1</name>
<comment type="function">
    <text evidence="1">Catalyzes the oxidation of either pyridoxine 5'-phosphate (PNP) or pyridoxamine 5'-phosphate (PMP) into pyridoxal 5'-phosphate (PLP).</text>
</comment>
<comment type="catalytic activity">
    <reaction evidence="1">
        <text>pyridoxamine 5'-phosphate + O2 + H2O = pyridoxal 5'-phosphate + H2O2 + NH4(+)</text>
        <dbReference type="Rhea" id="RHEA:15817"/>
        <dbReference type="ChEBI" id="CHEBI:15377"/>
        <dbReference type="ChEBI" id="CHEBI:15379"/>
        <dbReference type="ChEBI" id="CHEBI:16240"/>
        <dbReference type="ChEBI" id="CHEBI:28938"/>
        <dbReference type="ChEBI" id="CHEBI:58451"/>
        <dbReference type="ChEBI" id="CHEBI:597326"/>
        <dbReference type="EC" id="1.4.3.5"/>
    </reaction>
</comment>
<comment type="catalytic activity">
    <reaction evidence="1">
        <text>pyridoxine 5'-phosphate + O2 = pyridoxal 5'-phosphate + H2O2</text>
        <dbReference type="Rhea" id="RHEA:15149"/>
        <dbReference type="ChEBI" id="CHEBI:15379"/>
        <dbReference type="ChEBI" id="CHEBI:16240"/>
        <dbReference type="ChEBI" id="CHEBI:58589"/>
        <dbReference type="ChEBI" id="CHEBI:597326"/>
        <dbReference type="EC" id="1.4.3.5"/>
    </reaction>
</comment>
<comment type="cofactor">
    <cofactor evidence="1">
        <name>FMN</name>
        <dbReference type="ChEBI" id="CHEBI:58210"/>
    </cofactor>
    <text evidence="1">Binds 1 FMN per subunit.</text>
</comment>
<comment type="pathway">
    <text evidence="1">Cofactor metabolism; pyridoxal 5'-phosphate salvage; pyridoxal 5'-phosphate from pyridoxamine 5'-phosphate: step 1/1.</text>
</comment>
<comment type="pathway">
    <text evidence="1">Cofactor metabolism; pyridoxal 5'-phosphate salvage; pyridoxal 5'-phosphate from pyridoxine 5'-phosphate: step 1/1.</text>
</comment>
<comment type="subunit">
    <text evidence="1">Homodimer.</text>
</comment>
<comment type="similarity">
    <text evidence="1">Belongs to the pyridoxamine 5'-phosphate oxidase family.</text>
</comment>
<comment type="sequence caution" evidence="2">
    <conflict type="erroneous initiation">
        <sequence resource="EMBL-CDS" id="BAE49690"/>
    </conflict>
</comment>
<feature type="chain" id="PRO_0000255870" description="Pyridoxine/pyridoxamine 5'-phosphate oxidase">
    <location>
        <begin position="1"/>
        <end position="195"/>
    </location>
</feature>
<feature type="binding site" evidence="1">
    <location>
        <begin position="44"/>
        <end position="49"/>
    </location>
    <ligand>
        <name>FMN</name>
        <dbReference type="ChEBI" id="CHEBI:58210"/>
    </ligand>
</feature>
<feature type="binding site" evidence="1">
    <location>
        <position position="49"/>
    </location>
    <ligand>
        <name>substrate</name>
    </ligand>
</feature>
<feature type="binding site" evidence="1">
    <location>
        <begin position="59"/>
        <end position="60"/>
    </location>
    <ligand>
        <name>FMN</name>
        <dbReference type="ChEBI" id="CHEBI:58210"/>
    </ligand>
</feature>
<feature type="binding site" evidence="1">
    <location>
        <position position="65"/>
    </location>
    <ligand>
        <name>FMN</name>
        <dbReference type="ChEBI" id="CHEBI:58210"/>
    </ligand>
</feature>
<feature type="binding site" evidence="1">
    <location>
        <position position="66"/>
    </location>
    <ligand>
        <name>FMN</name>
        <dbReference type="ChEBI" id="CHEBI:58210"/>
    </ligand>
</feature>
<feature type="binding site" evidence="1">
    <location>
        <position position="88"/>
    </location>
    <ligand>
        <name>FMN</name>
        <dbReference type="ChEBI" id="CHEBI:58210"/>
    </ligand>
</feature>
<feature type="binding site" evidence="1">
    <location>
        <position position="106"/>
    </location>
    <ligand>
        <name>substrate</name>
    </ligand>
</feature>
<feature type="binding site" evidence="1">
    <location>
        <position position="110"/>
    </location>
    <ligand>
        <name>substrate</name>
    </ligand>
</feature>
<feature type="binding site" evidence="1">
    <location>
        <position position="114"/>
    </location>
    <ligand>
        <name>substrate</name>
    </ligand>
</feature>
<feature type="binding site" evidence="1">
    <location>
        <begin position="123"/>
        <end position="124"/>
    </location>
    <ligand>
        <name>FMN</name>
        <dbReference type="ChEBI" id="CHEBI:58210"/>
    </ligand>
</feature>
<feature type="binding site" evidence="1">
    <location>
        <position position="168"/>
    </location>
    <ligand>
        <name>FMN</name>
        <dbReference type="ChEBI" id="CHEBI:58210"/>
    </ligand>
</feature>
<feature type="binding site" evidence="1">
    <location>
        <begin position="174"/>
        <end position="176"/>
    </location>
    <ligand>
        <name>substrate</name>
    </ligand>
</feature>
<feature type="binding site" evidence="1">
    <location>
        <position position="178"/>
    </location>
    <ligand>
        <name>FMN</name>
        <dbReference type="ChEBI" id="CHEBI:58210"/>
    </ligand>
</feature>
<keyword id="KW-0285">Flavoprotein</keyword>
<keyword id="KW-0288">FMN</keyword>
<keyword id="KW-0560">Oxidoreductase</keyword>
<keyword id="KW-0664">Pyridoxine biosynthesis</keyword>
<accession>Q2W8Y5</accession>
<sequence>MSAPEADPLVLFHKWMDEAEKAEPNDPNAMALATADAEGRPSVRMVLLKGADQDGFVFFTNLESRKGQELAANPHAALCLHWKSLRRQIRVEGSITRVSDEEADAYFATRARASQIGAWASIQSRPLTGRFELEKRVGEFAAKFGLGKVPRPPHWSGFRLAPRRIEFWHDRPFRLHDRFDYVRDGDGWHLEHLYP</sequence>
<evidence type="ECO:0000255" key="1">
    <source>
        <dbReference type="HAMAP-Rule" id="MF_01629"/>
    </source>
</evidence>
<evidence type="ECO:0000305" key="2"/>
<dbReference type="EC" id="1.4.3.5" evidence="1"/>
<dbReference type="EMBL" id="AP007255">
    <property type="protein sequence ID" value="BAE49690.1"/>
    <property type="status" value="ALT_INIT"/>
    <property type="molecule type" value="Genomic_DNA"/>
</dbReference>
<dbReference type="RefSeq" id="WP_043743428.1">
    <property type="nucleotide sequence ID" value="NC_007626.1"/>
</dbReference>
<dbReference type="SMR" id="Q2W8Y5"/>
<dbReference type="STRING" id="342108.amb0886"/>
<dbReference type="KEGG" id="mag:amb0886"/>
<dbReference type="HOGENOM" id="CLU_032263_2_2_5"/>
<dbReference type="OrthoDB" id="9780392at2"/>
<dbReference type="UniPathway" id="UPA01068">
    <property type="reaction ID" value="UER00304"/>
</dbReference>
<dbReference type="UniPathway" id="UPA01068">
    <property type="reaction ID" value="UER00305"/>
</dbReference>
<dbReference type="Proteomes" id="UP000007058">
    <property type="component" value="Chromosome"/>
</dbReference>
<dbReference type="GO" id="GO:0010181">
    <property type="term" value="F:FMN binding"/>
    <property type="evidence" value="ECO:0007669"/>
    <property type="project" value="UniProtKB-UniRule"/>
</dbReference>
<dbReference type="GO" id="GO:0004733">
    <property type="term" value="F:pyridoxamine phosphate oxidase activity"/>
    <property type="evidence" value="ECO:0007669"/>
    <property type="project" value="UniProtKB-UniRule"/>
</dbReference>
<dbReference type="GO" id="GO:0008615">
    <property type="term" value="P:pyridoxine biosynthetic process"/>
    <property type="evidence" value="ECO:0007669"/>
    <property type="project" value="UniProtKB-KW"/>
</dbReference>
<dbReference type="Gene3D" id="2.30.110.10">
    <property type="entry name" value="Electron Transport, Fmn-binding Protein, Chain A"/>
    <property type="match status" value="1"/>
</dbReference>
<dbReference type="HAMAP" id="MF_01629">
    <property type="entry name" value="PdxH"/>
    <property type="match status" value="1"/>
</dbReference>
<dbReference type="InterPro" id="IPR000659">
    <property type="entry name" value="Pyridox_Oxase"/>
</dbReference>
<dbReference type="InterPro" id="IPR019740">
    <property type="entry name" value="Pyridox_Oxase_CS"/>
</dbReference>
<dbReference type="InterPro" id="IPR011576">
    <property type="entry name" value="Pyridox_Oxase_N"/>
</dbReference>
<dbReference type="InterPro" id="IPR019576">
    <property type="entry name" value="Pyridoxamine_oxidase_dimer_C"/>
</dbReference>
<dbReference type="InterPro" id="IPR012349">
    <property type="entry name" value="Split_barrel_FMN-bd"/>
</dbReference>
<dbReference type="NCBIfam" id="TIGR00558">
    <property type="entry name" value="pdxH"/>
    <property type="match status" value="1"/>
</dbReference>
<dbReference type="NCBIfam" id="NF004231">
    <property type="entry name" value="PRK05679.1"/>
    <property type="match status" value="1"/>
</dbReference>
<dbReference type="PANTHER" id="PTHR10851:SF0">
    <property type="entry name" value="PYRIDOXINE-5'-PHOSPHATE OXIDASE"/>
    <property type="match status" value="1"/>
</dbReference>
<dbReference type="PANTHER" id="PTHR10851">
    <property type="entry name" value="PYRIDOXINE-5-PHOSPHATE OXIDASE"/>
    <property type="match status" value="1"/>
</dbReference>
<dbReference type="Pfam" id="PF10590">
    <property type="entry name" value="PNP_phzG_C"/>
    <property type="match status" value="1"/>
</dbReference>
<dbReference type="Pfam" id="PF01243">
    <property type="entry name" value="PNPOx_N"/>
    <property type="match status" value="1"/>
</dbReference>
<dbReference type="PIRSF" id="PIRSF000190">
    <property type="entry name" value="Pyd_amn-ph_oxd"/>
    <property type="match status" value="1"/>
</dbReference>
<dbReference type="SUPFAM" id="SSF50475">
    <property type="entry name" value="FMN-binding split barrel"/>
    <property type="match status" value="1"/>
</dbReference>
<dbReference type="PROSITE" id="PS01064">
    <property type="entry name" value="PYRIDOX_OXIDASE"/>
    <property type="match status" value="1"/>
</dbReference>
<gene>
    <name evidence="1" type="primary">pdxH</name>
    <name type="ordered locus">amb0886</name>
</gene>
<proteinExistence type="inferred from homology"/>
<reference key="1">
    <citation type="journal article" date="2005" name="DNA Res.">
        <title>Complete genome sequence of the facultative anaerobic magnetotactic bacterium Magnetospirillum sp. strain AMB-1.</title>
        <authorList>
            <person name="Matsunaga T."/>
            <person name="Okamura Y."/>
            <person name="Fukuda Y."/>
            <person name="Wahyudi A.T."/>
            <person name="Murase Y."/>
            <person name="Takeyama H."/>
        </authorList>
    </citation>
    <scope>NUCLEOTIDE SEQUENCE [LARGE SCALE GENOMIC DNA]</scope>
    <source>
        <strain>ATCC 700264 / AMB-1</strain>
    </source>
</reference>